<name>PVK3_POLAY</name>
<dbReference type="GO" id="GO:0005576">
    <property type="term" value="C:extracellular region"/>
    <property type="evidence" value="ECO:0007669"/>
    <property type="project" value="UniProtKB-SubCell"/>
</dbReference>
<dbReference type="GO" id="GO:0007218">
    <property type="term" value="P:neuropeptide signaling pathway"/>
    <property type="evidence" value="ECO:0007669"/>
    <property type="project" value="UniProtKB-KW"/>
</dbReference>
<dbReference type="InterPro" id="IPR013231">
    <property type="entry name" value="Periviscerokinin"/>
</dbReference>
<dbReference type="Pfam" id="PF08259">
    <property type="entry name" value="Periviscerokin"/>
    <property type="match status" value="1"/>
</dbReference>
<comment type="function">
    <text evidence="4">Mediates visceral muscle contractile activity (myotropic activity).</text>
</comment>
<comment type="subcellular location">
    <subcellularLocation>
        <location evidence="4">Secreted</location>
    </subcellularLocation>
</comment>
<comment type="similarity">
    <text evidence="1">Belongs to the periviscerokinin family.</text>
</comment>
<protein>
    <recommendedName>
        <fullName evidence="3">Periviscerokinin-3</fullName>
        <shortName evidence="3">PolAe-PVK-3</shortName>
    </recommendedName>
</protein>
<keyword id="KW-0027">Amidation</keyword>
<keyword id="KW-0903">Direct protein sequencing</keyword>
<keyword id="KW-0527">Neuropeptide</keyword>
<keyword id="KW-0964">Secreted</keyword>
<feature type="peptide" id="PRO_0000378851" description="Periviscerokinin-3" evidence="2">
    <location>
        <begin position="1"/>
        <end position="11"/>
    </location>
</feature>
<feature type="modified residue" description="Valine amide" evidence="2">
    <location>
        <position position="11"/>
    </location>
</feature>
<accession>P85740</accession>
<sequence length="11" mass="1222">PQVGLIPFPRV</sequence>
<reference evidence="4" key="1">
    <citation type="journal article" date="2009" name="BMC Evol. Biol.">
        <title>A proteomic approach for studying insect phylogeny: CAPA peptides of ancient insect taxa (Dictyoptera, Blattoptera) as a test case.</title>
        <authorList>
            <person name="Roth S."/>
            <person name="Fromm B."/>
            <person name="Gaede G."/>
            <person name="Predel R."/>
        </authorList>
    </citation>
    <scope>PROTEIN SEQUENCE</scope>
    <scope>AMIDATION AT VAL-11</scope>
    <source>
        <tissue evidence="2">Abdominal perisympathetic organs</tissue>
    </source>
</reference>
<organism>
    <name type="scientific">Polyphaga aegyptiaca</name>
    <name type="common">Egyptian desert roach</name>
    <dbReference type="NCBI Taxonomy" id="7085"/>
    <lineage>
        <taxon>Eukaryota</taxon>
        <taxon>Metazoa</taxon>
        <taxon>Ecdysozoa</taxon>
        <taxon>Arthropoda</taxon>
        <taxon>Hexapoda</taxon>
        <taxon>Insecta</taxon>
        <taxon>Pterygota</taxon>
        <taxon>Neoptera</taxon>
        <taxon>Polyneoptera</taxon>
        <taxon>Dictyoptera</taxon>
        <taxon>Blattodea</taxon>
        <taxon>Corydioidea</taxon>
        <taxon>Corydiidae</taxon>
        <taxon>Polyphaga</taxon>
    </lineage>
</organism>
<proteinExistence type="evidence at protein level"/>
<evidence type="ECO:0000255" key="1"/>
<evidence type="ECO:0000269" key="2">
    <source>
    </source>
</evidence>
<evidence type="ECO:0000303" key="3">
    <source>
    </source>
</evidence>
<evidence type="ECO:0000305" key="4"/>